<protein>
    <recommendedName>
        <fullName evidence="1">Small ribosomal subunit protein uS11</fullName>
    </recommendedName>
    <alternativeName>
        <fullName evidence="2">30S ribosomal protein S11</fullName>
    </alternativeName>
</protein>
<feature type="chain" id="PRO_1000165547" description="Small ribosomal subunit protein uS11">
    <location>
        <begin position="1"/>
        <end position="129"/>
    </location>
</feature>
<evidence type="ECO:0000255" key="1">
    <source>
        <dbReference type="HAMAP-Rule" id="MF_01310"/>
    </source>
</evidence>
<evidence type="ECO:0000305" key="2"/>
<gene>
    <name evidence="1" type="primary">rpsK</name>
    <name type="ordered locus">E2348C_3560</name>
</gene>
<organism>
    <name type="scientific">Escherichia coli O127:H6 (strain E2348/69 / EPEC)</name>
    <dbReference type="NCBI Taxonomy" id="574521"/>
    <lineage>
        <taxon>Bacteria</taxon>
        <taxon>Pseudomonadati</taxon>
        <taxon>Pseudomonadota</taxon>
        <taxon>Gammaproteobacteria</taxon>
        <taxon>Enterobacterales</taxon>
        <taxon>Enterobacteriaceae</taxon>
        <taxon>Escherichia</taxon>
    </lineage>
</organism>
<dbReference type="EMBL" id="FM180568">
    <property type="protein sequence ID" value="CAS11108.1"/>
    <property type="molecule type" value="Genomic_DNA"/>
</dbReference>
<dbReference type="RefSeq" id="WP_001029684.1">
    <property type="nucleotide sequence ID" value="NC_011601.1"/>
</dbReference>
<dbReference type="SMR" id="B7UK21"/>
<dbReference type="GeneID" id="93778690"/>
<dbReference type="KEGG" id="ecg:E2348C_3560"/>
<dbReference type="HOGENOM" id="CLU_072439_5_0_6"/>
<dbReference type="Proteomes" id="UP000008205">
    <property type="component" value="Chromosome"/>
</dbReference>
<dbReference type="GO" id="GO:1990904">
    <property type="term" value="C:ribonucleoprotein complex"/>
    <property type="evidence" value="ECO:0007669"/>
    <property type="project" value="UniProtKB-KW"/>
</dbReference>
<dbReference type="GO" id="GO:0005840">
    <property type="term" value="C:ribosome"/>
    <property type="evidence" value="ECO:0007669"/>
    <property type="project" value="UniProtKB-KW"/>
</dbReference>
<dbReference type="GO" id="GO:0019843">
    <property type="term" value="F:rRNA binding"/>
    <property type="evidence" value="ECO:0007669"/>
    <property type="project" value="UniProtKB-UniRule"/>
</dbReference>
<dbReference type="GO" id="GO:0003735">
    <property type="term" value="F:structural constituent of ribosome"/>
    <property type="evidence" value="ECO:0007669"/>
    <property type="project" value="InterPro"/>
</dbReference>
<dbReference type="GO" id="GO:0006412">
    <property type="term" value="P:translation"/>
    <property type="evidence" value="ECO:0007669"/>
    <property type="project" value="UniProtKB-UniRule"/>
</dbReference>
<dbReference type="FunFam" id="3.30.420.80:FF:000001">
    <property type="entry name" value="30S ribosomal protein S11"/>
    <property type="match status" value="1"/>
</dbReference>
<dbReference type="Gene3D" id="3.30.420.80">
    <property type="entry name" value="Ribosomal protein S11"/>
    <property type="match status" value="1"/>
</dbReference>
<dbReference type="HAMAP" id="MF_01310">
    <property type="entry name" value="Ribosomal_uS11"/>
    <property type="match status" value="1"/>
</dbReference>
<dbReference type="InterPro" id="IPR001971">
    <property type="entry name" value="Ribosomal_uS11"/>
</dbReference>
<dbReference type="InterPro" id="IPR019981">
    <property type="entry name" value="Ribosomal_uS11_bac-type"/>
</dbReference>
<dbReference type="InterPro" id="IPR018102">
    <property type="entry name" value="Ribosomal_uS11_CS"/>
</dbReference>
<dbReference type="InterPro" id="IPR036967">
    <property type="entry name" value="Ribosomal_uS11_sf"/>
</dbReference>
<dbReference type="NCBIfam" id="NF003698">
    <property type="entry name" value="PRK05309.1"/>
    <property type="match status" value="1"/>
</dbReference>
<dbReference type="NCBIfam" id="TIGR03632">
    <property type="entry name" value="uS11_bact"/>
    <property type="match status" value="1"/>
</dbReference>
<dbReference type="PANTHER" id="PTHR11759">
    <property type="entry name" value="40S RIBOSOMAL PROTEIN S14/30S RIBOSOMAL PROTEIN S11"/>
    <property type="match status" value="1"/>
</dbReference>
<dbReference type="Pfam" id="PF00411">
    <property type="entry name" value="Ribosomal_S11"/>
    <property type="match status" value="1"/>
</dbReference>
<dbReference type="PIRSF" id="PIRSF002131">
    <property type="entry name" value="Ribosomal_S11"/>
    <property type="match status" value="1"/>
</dbReference>
<dbReference type="SUPFAM" id="SSF53137">
    <property type="entry name" value="Translational machinery components"/>
    <property type="match status" value="1"/>
</dbReference>
<dbReference type="PROSITE" id="PS00054">
    <property type="entry name" value="RIBOSOMAL_S11"/>
    <property type="match status" value="1"/>
</dbReference>
<name>RS11_ECO27</name>
<sequence length="129" mass="13845">MAKAPIRARKRVRKQVSDGVAHIHASFNNTIVTITDRQGNALGWATAGGSGFRGSRKSTPFAAQVAAERCADAVKEYGIKNLEVMVKGPGPGRESTIRALNAAGFRITNITDVTPIPHNGCRPPKKRRV</sequence>
<proteinExistence type="inferred from homology"/>
<keyword id="KW-1185">Reference proteome</keyword>
<keyword id="KW-0687">Ribonucleoprotein</keyword>
<keyword id="KW-0689">Ribosomal protein</keyword>
<keyword id="KW-0694">RNA-binding</keyword>
<keyword id="KW-0699">rRNA-binding</keyword>
<reference key="1">
    <citation type="journal article" date="2009" name="J. Bacteriol.">
        <title>Complete genome sequence and comparative genome analysis of enteropathogenic Escherichia coli O127:H6 strain E2348/69.</title>
        <authorList>
            <person name="Iguchi A."/>
            <person name="Thomson N.R."/>
            <person name="Ogura Y."/>
            <person name="Saunders D."/>
            <person name="Ooka T."/>
            <person name="Henderson I.R."/>
            <person name="Harris D."/>
            <person name="Asadulghani M."/>
            <person name="Kurokawa K."/>
            <person name="Dean P."/>
            <person name="Kenny B."/>
            <person name="Quail M.A."/>
            <person name="Thurston S."/>
            <person name="Dougan G."/>
            <person name="Hayashi T."/>
            <person name="Parkhill J."/>
            <person name="Frankel G."/>
        </authorList>
    </citation>
    <scope>NUCLEOTIDE SEQUENCE [LARGE SCALE GENOMIC DNA]</scope>
    <source>
        <strain>E2348/69 / EPEC</strain>
    </source>
</reference>
<comment type="function">
    <text evidence="1">Located on the platform of the 30S subunit, it bridges several disparate RNA helices of the 16S rRNA. Forms part of the Shine-Dalgarno cleft in the 70S ribosome.</text>
</comment>
<comment type="subunit">
    <text evidence="1">Part of the 30S ribosomal subunit. Interacts with proteins S7 and S18. Binds to IF-3.</text>
</comment>
<comment type="similarity">
    <text evidence="1">Belongs to the universal ribosomal protein uS11 family.</text>
</comment>
<accession>B7UK21</accession>